<organism>
    <name type="scientific">Geobacillus stearothermophilus</name>
    <name type="common">Bacillus stearothermophilus</name>
    <dbReference type="NCBI Taxonomy" id="1422"/>
    <lineage>
        <taxon>Bacteria</taxon>
        <taxon>Bacillati</taxon>
        <taxon>Bacillota</taxon>
        <taxon>Bacilli</taxon>
        <taxon>Bacillales</taxon>
        <taxon>Anoxybacillaceae</taxon>
        <taxon>Geobacillus</taxon>
    </lineage>
</organism>
<name>BLE_GEOSE</name>
<comment type="function">
    <text>Binding protein with a strong affinity to the bleomycin family of antibiotics.</text>
</comment>
<comment type="similarity">
    <text evidence="2">Belongs to the bleomycin resistance protein family.</text>
</comment>
<proteinExistence type="inferred from homology"/>
<geneLocation type="plasmid">
    <name>pTB913</name>
</geneLocation>
<geneLocation type="plasmid">
    <name>pTB19</name>
</geneLocation>
<gene>
    <name type="primary">bleO</name>
</gene>
<protein>
    <recommendedName>
        <fullName>Bleomycin resistance protein</fullName>
        <shortName>BRP</shortName>
    </recommendedName>
</protein>
<sequence length="132" mass="14922">MLQSIPALPVGDIKKSIGFYCDKLGFTLVHHEDGFAVLMCNEVRIHLWEASDEGWRSRSNDSPVCTGAESFIAGTASCRIEVEGIDELYQHIKPLGILHPNTSLKDQWWDERDFAVIDPDNNLISFFQQIKS</sequence>
<feature type="chain" id="PRO_0000068560" description="Bleomycin resistance protein">
    <location>
        <begin position="1"/>
        <end position="132"/>
    </location>
</feature>
<feature type="domain" description="VOC" evidence="1">
    <location>
        <begin position="1"/>
        <end position="129"/>
    </location>
</feature>
<evidence type="ECO:0000255" key="1">
    <source>
        <dbReference type="PROSITE-ProRule" id="PRU01163"/>
    </source>
</evidence>
<evidence type="ECO:0000305" key="2"/>
<dbReference type="EMBL" id="X15670">
    <property type="protein sequence ID" value="CAA33716.1"/>
    <property type="molecule type" value="Genomic_DNA"/>
</dbReference>
<dbReference type="EMBL" id="M63891">
    <property type="protein sequence ID" value="AAA98306.1"/>
    <property type="molecule type" value="Genomic_DNA"/>
</dbReference>
<dbReference type="PIR" id="S05986">
    <property type="entry name" value="S05986"/>
</dbReference>
<dbReference type="RefSeq" id="YP_009062839.1">
    <property type="nucleotide sequence ID" value="NC_025008.1"/>
</dbReference>
<dbReference type="SMR" id="P67925"/>
<dbReference type="GO" id="GO:0046677">
    <property type="term" value="P:response to antibiotic"/>
    <property type="evidence" value="ECO:0007669"/>
    <property type="project" value="UniProtKB-KW"/>
</dbReference>
<dbReference type="CDD" id="cd08349">
    <property type="entry name" value="BLMA_like"/>
    <property type="match status" value="1"/>
</dbReference>
<dbReference type="Gene3D" id="3.10.180.10">
    <property type="entry name" value="2,3-Dihydroxybiphenyl 1,2-Dioxygenase, domain 1"/>
    <property type="match status" value="1"/>
</dbReference>
<dbReference type="InterPro" id="IPR000335">
    <property type="entry name" value="Bleomycin-R"/>
</dbReference>
<dbReference type="InterPro" id="IPR029068">
    <property type="entry name" value="Glyas_Bleomycin-R_OHBP_Dase"/>
</dbReference>
<dbReference type="InterPro" id="IPR004360">
    <property type="entry name" value="Glyas_Fos-R_dOase_dom"/>
</dbReference>
<dbReference type="InterPro" id="IPR037523">
    <property type="entry name" value="VOC"/>
</dbReference>
<dbReference type="NCBIfam" id="NF000027">
    <property type="entry name" value="156720500_bleO"/>
    <property type="match status" value="1"/>
</dbReference>
<dbReference type="Pfam" id="PF00903">
    <property type="entry name" value="Glyoxalase"/>
    <property type="match status" value="1"/>
</dbReference>
<dbReference type="PRINTS" id="PR00311">
    <property type="entry name" value="BLEOMYCINRST"/>
</dbReference>
<dbReference type="SUPFAM" id="SSF54593">
    <property type="entry name" value="Glyoxalase/Bleomycin resistance protein/Dihydroxybiphenyl dioxygenase"/>
    <property type="match status" value="1"/>
</dbReference>
<dbReference type="PROSITE" id="PS51819">
    <property type="entry name" value="VOC"/>
    <property type="match status" value="1"/>
</dbReference>
<keyword id="KW-0046">Antibiotic resistance</keyword>
<keyword id="KW-0614">Plasmid</keyword>
<accession>P67925</accession>
<accession>P13014</accession>
<reference key="1">
    <citation type="journal article" date="1989" name="Nucleic Acids Res.">
        <title>Similarity of minus origins of replication and flanking open reading frames of plasmids pUB110, pTB913 and pMV158.</title>
        <authorList>
            <person name="van der Lelie D."/>
            <person name="Bron S."/>
            <person name="Venema G."/>
            <person name="Oskam L."/>
        </authorList>
    </citation>
    <scope>NUCLEOTIDE SEQUENCE [GENOMIC DNA]</scope>
    <source>
        <plasmid>pTB913</plasmid>
    </source>
</reference>
<reference key="2">
    <citation type="journal article" date="1991" name="Plasmid">
        <title>The large Bacillus plasmid pTB19 contains two integrated rolling-circle plasmids carrying mobilization functions.</title>
        <authorList>
            <person name="Oskam L."/>
            <person name="Hillenga D.J."/>
            <person name="Venema G."/>
            <person name="Bron S."/>
        </authorList>
    </citation>
    <scope>NUCLEOTIDE SEQUENCE [GENOMIC DNA]</scope>
    <source>
        <plasmid>pTB19</plasmid>
    </source>
</reference>